<protein>
    <recommendedName>
        <fullName>BTB/POZ domain-containing protein KCTD18</fullName>
    </recommendedName>
</protein>
<organism>
    <name type="scientific">Homo sapiens</name>
    <name type="common">Human</name>
    <dbReference type="NCBI Taxonomy" id="9606"/>
    <lineage>
        <taxon>Eukaryota</taxon>
        <taxon>Metazoa</taxon>
        <taxon>Chordata</taxon>
        <taxon>Craniata</taxon>
        <taxon>Vertebrata</taxon>
        <taxon>Euteleostomi</taxon>
        <taxon>Mammalia</taxon>
        <taxon>Eutheria</taxon>
        <taxon>Euarchontoglires</taxon>
        <taxon>Primates</taxon>
        <taxon>Haplorrhini</taxon>
        <taxon>Catarrhini</taxon>
        <taxon>Hominidae</taxon>
        <taxon>Homo</taxon>
    </lineage>
</organism>
<reference key="1">
    <citation type="journal article" date="2004" name="Nat. Genet.">
        <title>Complete sequencing and characterization of 21,243 full-length human cDNAs.</title>
        <authorList>
            <person name="Ota T."/>
            <person name="Suzuki Y."/>
            <person name="Nishikawa T."/>
            <person name="Otsuki T."/>
            <person name="Sugiyama T."/>
            <person name="Irie R."/>
            <person name="Wakamatsu A."/>
            <person name="Hayashi K."/>
            <person name="Sato H."/>
            <person name="Nagai K."/>
            <person name="Kimura K."/>
            <person name="Makita H."/>
            <person name="Sekine M."/>
            <person name="Obayashi M."/>
            <person name="Nishi T."/>
            <person name="Shibahara T."/>
            <person name="Tanaka T."/>
            <person name="Ishii S."/>
            <person name="Yamamoto J."/>
            <person name="Saito K."/>
            <person name="Kawai Y."/>
            <person name="Isono Y."/>
            <person name="Nakamura Y."/>
            <person name="Nagahari K."/>
            <person name="Murakami K."/>
            <person name="Yasuda T."/>
            <person name="Iwayanagi T."/>
            <person name="Wagatsuma M."/>
            <person name="Shiratori A."/>
            <person name="Sudo H."/>
            <person name="Hosoiri T."/>
            <person name="Kaku Y."/>
            <person name="Kodaira H."/>
            <person name="Kondo H."/>
            <person name="Sugawara M."/>
            <person name="Takahashi M."/>
            <person name="Kanda K."/>
            <person name="Yokoi T."/>
            <person name="Furuya T."/>
            <person name="Kikkawa E."/>
            <person name="Omura Y."/>
            <person name="Abe K."/>
            <person name="Kamihara K."/>
            <person name="Katsuta N."/>
            <person name="Sato K."/>
            <person name="Tanikawa M."/>
            <person name="Yamazaki M."/>
            <person name="Ninomiya K."/>
            <person name="Ishibashi T."/>
            <person name="Yamashita H."/>
            <person name="Murakawa K."/>
            <person name="Fujimori K."/>
            <person name="Tanai H."/>
            <person name="Kimata M."/>
            <person name="Watanabe M."/>
            <person name="Hiraoka S."/>
            <person name="Chiba Y."/>
            <person name="Ishida S."/>
            <person name="Ono Y."/>
            <person name="Takiguchi S."/>
            <person name="Watanabe S."/>
            <person name="Yosida M."/>
            <person name="Hotuta T."/>
            <person name="Kusano J."/>
            <person name="Kanehori K."/>
            <person name="Takahashi-Fujii A."/>
            <person name="Hara H."/>
            <person name="Tanase T.-O."/>
            <person name="Nomura Y."/>
            <person name="Togiya S."/>
            <person name="Komai F."/>
            <person name="Hara R."/>
            <person name="Takeuchi K."/>
            <person name="Arita M."/>
            <person name="Imose N."/>
            <person name="Musashino K."/>
            <person name="Yuuki H."/>
            <person name="Oshima A."/>
            <person name="Sasaki N."/>
            <person name="Aotsuka S."/>
            <person name="Yoshikawa Y."/>
            <person name="Matsunawa H."/>
            <person name="Ichihara T."/>
            <person name="Shiohata N."/>
            <person name="Sano S."/>
            <person name="Moriya S."/>
            <person name="Momiyama H."/>
            <person name="Satoh N."/>
            <person name="Takami S."/>
            <person name="Terashima Y."/>
            <person name="Suzuki O."/>
            <person name="Nakagawa S."/>
            <person name="Senoh A."/>
            <person name="Mizoguchi H."/>
            <person name="Goto Y."/>
            <person name="Shimizu F."/>
            <person name="Wakebe H."/>
            <person name="Hishigaki H."/>
            <person name="Watanabe T."/>
            <person name="Sugiyama A."/>
            <person name="Takemoto M."/>
            <person name="Kawakami B."/>
            <person name="Yamazaki M."/>
            <person name="Watanabe K."/>
            <person name="Kumagai A."/>
            <person name="Itakura S."/>
            <person name="Fukuzumi Y."/>
            <person name="Fujimori Y."/>
            <person name="Komiyama M."/>
            <person name="Tashiro H."/>
            <person name="Tanigami A."/>
            <person name="Fujiwara T."/>
            <person name="Ono T."/>
            <person name="Yamada K."/>
            <person name="Fujii Y."/>
            <person name="Ozaki K."/>
            <person name="Hirao M."/>
            <person name="Ohmori Y."/>
            <person name="Kawabata A."/>
            <person name="Hikiji T."/>
            <person name="Kobatake N."/>
            <person name="Inagaki H."/>
            <person name="Ikema Y."/>
            <person name="Okamoto S."/>
            <person name="Okitani R."/>
            <person name="Kawakami T."/>
            <person name="Noguchi S."/>
            <person name="Itoh T."/>
            <person name="Shigeta K."/>
            <person name="Senba T."/>
            <person name="Matsumura K."/>
            <person name="Nakajima Y."/>
            <person name="Mizuno T."/>
            <person name="Morinaga M."/>
            <person name="Sasaki M."/>
            <person name="Togashi T."/>
            <person name="Oyama M."/>
            <person name="Hata H."/>
            <person name="Watanabe M."/>
            <person name="Komatsu T."/>
            <person name="Mizushima-Sugano J."/>
            <person name="Satoh T."/>
            <person name="Shirai Y."/>
            <person name="Takahashi Y."/>
            <person name="Nakagawa K."/>
            <person name="Okumura K."/>
            <person name="Nagase T."/>
            <person name="Nomura N."/>
            <person name="Kikuchi H."/>
            <person name="Masuho Y."/>
            <person name="Yamashita R."/>
            <person name="Nakai K."/>
            <person name="Yada T."/>
            <person name="Nakamura Y."/>
            <person name="Ohara O."/>
            <person name="Isogai T."/>
            <person name="Sugano S."/>
        </authorList>
    </citation>
    <scope>NUCLEOTIDE SEQUENCE [LARGE SCALE MRNA] (ISOFORMS 2 AND 3)</scope>
    <scope>VARIANT VAL-333</scope>
    <source>
        <tissue>Liver</tissue>
        <tissue>Substantia nigra</tissue>
    </source>
</reference>
<reference key="2">
    <citation type="journal article" date="2005" name="Nature">
        <title>Generation and annotation of the DNA sequences of human chromosomes 2 and 4.</title>
        <authorList>
            <person name="Hillier L.W."/>
            <person name="Graves T.A."/>
            <person name="Fulton R.S."/>
            <person name="Fulton L.A."/>
            <person name="Pepin K.H."/>
            <person name="Minx P."/>
            <person name="Wagner-McPherson C."/>
            <person name="Layman D."/>
            <person name="Wylie K."/>
            <person name="Sekhon M."/>
            <person name="Becker M.C."/>
            <person name="Fewell G.A."/>
            <person name="Delehaunty K.D."/>
            <person name="Miner T.L."/>
            <person name="Nash W.E."/>
            <person name="Kremitzki C."/>
            <person name="Oddy L."/>
            <person name="Du H."/>
            <person name="Sun H."/>
            <person name="Bradshaw-Cordum H."/>
            <person name="Ali J."/>
            <person name="Carter J."/>
            <person name="Cordes M."/>
            <person name="Harris A."/>
            <person name="Isak A."/>
            <person name="van Brunt A."/>
            <person name="Nguyen C."/>
            <person name="Du F."/>
            <person name="Courtney L."/>
            <person name="Kalicki J."/>
            <person name="Ozersky P."/>
            <person name="Abbott S."/>
            <person name="Armstrong J."/>
            <person name="Belter E.A."/>
            <person name="Caruso L."/>
            <person name="Cedroni M."/>
            <person name="Cotton M."/>
            <person name="Davidson T."/>
            <person name="Desai A."/>
            <person name="Elliott G."/>
            <person name="Erb T."/>
            <person name="Fronick C."/>
            <person name="Gaige T."/>
            <person name="Haakenson W."/>
            <person name="Haglund K."/>
            <person name="Holmes A."/>
            <person name="Harkins R."/>
            <person name="Kim K."/>
            <person name="Kruchowski S.S."/>
            <person name="Strong C.M."/>
            <person name="Grewal N."/>
            <person name="Goyea E."/>
            <person name="Hou S."/>
            <person name="Levy A."/>
            <person name="Martinka S."/>
            <person name="Mead K."/>
            <person name="McLellan M.D."/>
            <person name="Meyer R."/>
            <person name="Randall-Maher J."/>
            <person name="Tomlinson C."/>
            <person name="Dauphin-Kohlberg S."/>
            <person name="Kozlowicz-Reilly A."/>
            <person name="Shah N."/>
            <person name="Swearengen-Shahid S."/>
            <person name="Snider J."/>
            <person name="Strong J.T."/>
            <person name="Thompson J."/>
            <person name="Yoakum M."/>
            <person name="Leonard S."/>
            <person name="Pearman C."/>
            <person name="Trani L."/>
            <person name="Radionenko M."/>
            <person name="Waligorski J.E."/>
            <person name="Wang C."/>
            <person name="Rock S.M."/>
            <person name="Tin-Wollam A.-M."/>
            <person name="Maupin R."/>
            <person name="Latreille P."/>
            <person name="Wendl M.C."/>
            <person name="Yang S.-P."/>
            <person name="Pohl C."/>
            <person name="Wallis J.W."/>
            <person name="Spieth J."/>
            <person name="Bieri T.A."/>
            <person name="Berkowicz N."/>
            <person name="Nelson J.O."/>
            <person name="Osborne J."/>
            <person name="Ding L."/>
            <person name="Meyer R."/>
            <person name="Sabo A."/>
            <person name="Shotland Y."/>
            <person name="Sinha P."/>
            <person name="Wohldmann P.E."/>
            <person name="Cook L.L."/>
            <person name="Hickenbotham M.T."/>
            <person name="Eldred J."/>
            <person name="Williams D."/>
            <person name="Jones T.A."/>
            <person name="She X."/>
            <person name="Ciccarelli F.D."/>
            <person name="Izaurralde E."/>
            <person name="Taylor J."/>
            <person name="Schmutz J."/>
            <person name="Myers R.M."/>
            <person name="Cox D.R."/>
            <person name="Huang X."/>
            <person name="McPherson J.D."/>
            <person name="Mardis E.R."/>
            <person name="Clifton S.W."/>
            <person name="Warren W.C."/>
            <person name="Chinwalla A.T."/>
            <person name="Eddy S.R."/>
            <person name="Marra M.A."/>
            <person name="Ovcharenko I."/>
            <person name="Furey T.S."/>
            <person name="Miller W."/>
            <person name="Eichler E.E."/>
            <person name="Bork P."/>
            <person name="Suyama M."/>
            <person name="Torrents D."/>
            <person name="Waterston R.H."/>
            <person name="Wilson R.K."/>
        </authorList>
    </citation>
    <scope>NUCLEOTIDE SEQUENCE [LARGE SCALE GENOMIC DNA]</scope>
</reference>
<reference key="3">
    <citation type="journal article" date="2004" name="Genome Res.">
        <title>The status, quality, and expansion of the NIH full-length cDNA project: the Mammalian Gene Collection (MGC).</title>
        <authorList>
            <consortium name="The MGC Project Team"/>
        </authorList>
    </citation>
    <scope>NUCLEOTIDE SEQUENCE [LARGE SCALE MRNA] (ISOFORM 1)</scope>
    <scope>VARIANT VAL-333</scope>
    <source>
        <tissue>Brain</tissue>
        <tissue>Testis</tissue>
    </source>
</reference>
<name>KCD18_HUMAN</name>
<sequence length="426" mass="46739">MEGHKAEEEVLDVLRLNVGGCIYTARRESLCRFKDSMLASMFSGRFPLKTDESGACVIDRDGRLFKYLLDYLHGEVQIPTDEQTRIALQEEADYFGIPYPYSLSDHLANEMETYSLRSNIELKKALTDFCDSYGLVCNKPTVWVLHYLNTSGASCESRIIGVYATKTDGTDAIEKQLGGRIHSKGIFKREAGNNVQYIWSYYSVAELKKMMDAFDAWEGKGVSYWRVPHELIECWTLEERPLLGSLRHMAPIRKRRLITFNEADESVNYKTGPKPVRFLGPSTSTQIKVKNSASVTVSPASAIQTSAGATANRFQSGSRRKAAQRSAPSRATALVGTGAPGHPQASPGAASAENGGTHLPPAKVLLSDKKPTPQRVIKLKRTPLCATAPCLPSPTATRQANSLKPLPGEAARALGVRTENGKNKGN</sequence>
<comment type="alternative products">
    <event type="alternative splicing"/>
    <isoform>
        <id>Q6PI47-1</id>
        <name>1</name>
        <sequence type="displayed"/>
    </isoform>
    <isoform>
        <id>Q6PI47-2</id>
        <name>2</name>
        <sequence type="described" ref="VSP_020325 VSP_020326"/>
    </isoform>
    <isoform>
        <id>Q6PI47-3</id>
        <name>3</name>
        <sequence type="described" ref="VSP_020323 VSP_020324"/>
    </isoform>
</comment>
<evidence type="ECO:0000256" key="1">
    <source>
        <dbReference type="SAM" id="MobiDB-lite"/>
    </source>
</evidence>
<evidence type="ECO:0000269" key="2">
    <source>
    </source>
</evidence>
<evidence type="ECO:0000269" key="3">
    <source>
    </source>
</evidence>
<evidence type="ECO:0000303" key="4">
    <source>
    </source>
</evidence>
<evidence type="ECO:0000305" key="5"/>
<dbReference type="EMBL" id="AK055884">
    <property type="protein sequence ID" value="BAB71035.1"/>
    <property type="molecule type" value="mRNA"/>
</dbReference>
<dbReference type="EMBL" id="AK095137">
    <property type="status" value="NOT_ANNOTATED_CDS"/>
    <property type="molecule type" value="mRNA"/>
</dbReference>
<dbReference type="EMBL" id="AC012459">
    <property type="protein sequence ID" value="AAY24308.1"/>
    <property type="molecule type" value="Genomic_DNA"/>
</dbReference>
<dbReference type="EMBL" id="AC012459">
    <property type="protein sequence ID" value="AAY24309.1"/>
    <property type="molecule type" value="Genomic_DNA"/>
</dbReference>
<dbReference type="EMBL" id="BC045189">
    <property type="protein sequence ID" value="AAH45189.1"/>
    <property type="molecule type" value="mRNA"/>
</dbReference>
<dbReference type="EMBL" id="BC067755">
    <property type="protein sequence ID" value="AAH67755.1"/>
    <property type="molecule type" value="mRNA"/>
</dbReference>
<dbReference type="CCDS" id="CCDS2330.1">
    <molecule id="Q6PI47-1"/>
</dbReference>
<dbReference type="RefSeq" id="NP_001308476.1">
    <molecule id="Q6PI47-1"/>
    <property type="nucleotide sequence ID" value="NM_001321547.2"/>
</dbReference>
<dbReference type="RefSeq" id="NP_689600.2">
    <molecule id="Q6PI47-1"/>
    <property type="nucleotide sequence ID" value="NM_152387.3"/>
</dbReference>
<dbReference type="SMR" id="Q6PI47"/>
<dbReference type="BioGRID" id="126238">
    <property type="interactions" value="15"/>
</dbReference>
<dbReference type="FunCoup" id="Q6PI47">
    <property type="interactions" value="1620"/>
</dbReference>
<dbReference type="IntAct" id="Q6PI47">
    <property type="interactions" value="11"/>
</dbReference>
<dbReference type="MINT" id="Q6PI47"/>
<dbReference type="STRING" id="9606.ENSP00000352941"/>
<dbReference type="GlyGen" id="Q6PI47">
    <property type="glycosylation" value="3 sites, 1 O-linked glycan (3 sites)"/>
</dbReference>
<dbReference type="iPTMnet" id="Q6PI47"/>
<dbReference type="PhosphoSitePlus" id="Q6PI47"/>
<dbReference type="BioMuta" id="KCTD18"/>
<dbReference type="DMDM" id="114149940"/>
<dbReference type="jPOST" id="Q6PI47"/>
<dbReference type="MassIVE" id="Q6PI47"/>
<dbReference type="PaxDb" id="9606-ENSP00000352941"/>
<dbReference type="PeptideAtlas" id="Q6PI47"/>
<dbReference type="ProteomicsDB" id="67136">
    <molecule id="Q6PI47-1"/>
</dbReference>
<dbReference type="ProteomicsDB" id="67137">
    <molecule id="Q6PI47-2"/>
</dbReference>
<dbReference type="ProteomicsDB" id="67138">
    <molecule id="Q6PI47-3"/>
</dbReference>
<dbReference type="Antibodypedia" id="19920">
    <property type="antibodies" value="85 antibodies from 17 providers"/>
</dbReference>
<dbReference type="DNASU" id="130535"/>
<dbReference type="Ensembl" id="ENST00000359878.8">
    <molecule id="Q6PI47-1"/>
    <property type="protein sequence ID" value="ENSP00000352941.3"/>
    <property type="gene ID" value="ENSG00000155729.13"/>
</dbReference>
<dbReference type="Ensembl" id="ENST00000409157.5">
    <molecule id="Q6PI47-1"/>
    <property type="protein sequence ID" value="ENSP00000386751.1"/>
    <property type="gene ID" value="ENSG00000155729.13"/>
</dbReference>
<dbReference type="GeneID" id="130535"/>
<dbReference type="KEGG" id="hsa:130535"/>
<dbReference type="MANE-Select" id="ENST00000359878.8">
    <property type="protein sequence ID" value="ENSP00000352941.3"/>
    <property type="RefSeq nucleotide sequence ID" value="NM_152387.4"/>
    <property type="RefSeq protein sequence ID" value="NP_689600.2"/>
</dbReference>
<dbReference type="UCSC" id="uc002uvs.4">
    <molecule id="Q6PI47-1"/>
    <property type="organism name" value="human"/>
</dbReference>
<dbReference type="AGR" id="HGNC:26446"/>
<dbReference type="CTD" id="130535"/>
<dbReference type="DisGeNET" id="130535"/>
<dbReference type="GeneCards" id="KCTD18"/>
<dbReference type="HGNC" id="HGNC:26446">
    <property type="gene designation" value="KCTD18"/>
</dbReference>
<dbReference type="HPA" id="ENSG00000155729">
    <property type="expression patterns" value="Low tissue specificity"/>
</dbReference>
<dbReference type="neXtProt" id="NX_Q6PI47"/>
<dbReference type="OpenTargets" id="ENSG00000155729"/>
<dbReference type="PharmGKB" id="PA142671639"/>
<dbReference type="VEuPathDB" id="HostDB:ENSG00000155729"/>
<dbReference type="eggNOG" id="KOG2723">
    <property type="taxonomic scope" value="Eukaryota"/>
</dbReference>
<dbReference type="GeneTree" id="ENSGT00530000064234"/>
<dbReference type="HOGENOM" id="CLU_052824_0_0_1"/>
<dbReference type="InParanoid" id="Q6PI47"/>
<dbReference type="OMA" id="CKAGPKP"/>
<dbReference type="OrthoDB" id="2414723at2759"/>
<dbReference type="PAN-GO" id="Q6PI47">
    <property type="GO annotations" value="0 GO annotations based on evolutionary models"/>
</dbReference>
<dbReference type="PhylomeDB" id="Q6PI47"/>
<dbReference type="TreeFam" id="TF315332"/>
<dbReference type="PathwayCommons" id="Q6PI47"/>
<dbReference type="SignaLink" id="Q6PI47"/>
<dbReference type="BioGRID-ORCS" id="130535">
    <property type="hits" value="6 hits in 1153 CRISPR screens"/>
</dbReference>
<dbReference type="ChiTaRS" id="KCTD18">
    <property type="organism name" value="human"/>
</dbReference>
<dbReference type="GenomeRNAi" id="130535"/>
<dbReference type="Pharos" id="Q6PI47">
    <property type="development level" value="Tdark"/>
</dbReference>
<dbReference type="PRO" id="PR:Q6PI47"/>
<dbReference type="Proteomes" id="UP000005640">
    <property type="component" value="Chromosome 2"/>
</dbReference>
<dbReference type="RNAct" id="Q6PI47">
    <property type="molecule type" value="protein"/>
</dbReference>
<dbReference type="Bgee" id="ENSG00000155729">
    <property type="expression patterns" value="Expressed in calcaneal tendon and 177 other cell types or tissues"/>
</dbReference>
<dbReference type="GO" id="GO:0042802">
    <property type="term" value="F:identical protein binding"/>
    <property type="evidence" value="ECO:0007669"/>
    <property type="project" value="UniProtKB-ARBA"/>
</dbReference>
<dbReference type="GO" id="GO:0051260">
    <property type="term" value="P:protein homooligomerization"/>
    <property type="evidence" value="ECO:0007669"/>
    <property type="project" value="InterPro"/>
</dbReference>
<dbReference type="CDD" id="cd18372">
    <property type="entry name" value="BTB_POZ_KCTD18"/>
    <property type="match status" value="1"/>
</dbReference>
<dbReference type="Gene3D" id="3.30.710.10">
    <property type="entry name" value="Potassium Channel Kv1.1, Chain A"/>
    <property type="match status" value="1"/>
</dbReference>
<dbReference type="InterPro" id="IPR045704">
    <property type="entry name" value="KCTD18_C"/>
</dbReference>
<dbReference type="InterPro" id="IPR011333">
    <property type="entry name" value="SKP1/BTB/POZ_sf"/>
</dbReference>
<dbReference type="InterPro" id="IPR003131">
    <property type="entry name" value="T1-type_BTB"/>
</dbReference>
<dbReference type="PANTHER" id="PTHR14499:SF4">
    <property type="entry name" value="BTB_POZ DOMAIN-CONTAINING PROTEIN KCTD18"/>
    <property type="match status" value="1"/>
</dbReference>
<dbReference type="PANTHER" id="PTHR14499">
    <property type="entry name" value="POTASSIUM CHANNEL TETRAMERIZATION DOMAIN-CONTAINING"/>
    <property type="match status" value="1"/>
</dbReference>
<dbReference type="Pfam" id="PF02214">
    <property type="entry name" value="BTB_2"/>
    <property type="match status" value="1"/>
</dbReference>
<dbReference type="Pfam" id="PF19321">
    <property type="entry name" value="KCTD18_C"/>
    <property type="match status" value="1"/>
</dbReference>
<dbReference type="SUPFAM" id="SSF54695">
    <property type="entry name" value="POZ domain"/>
    <property type="match status" value="1"/>
</dbReference>
<accession>Q6PI47</accession>
<accession>Q53T21</accession>
<accession>Q6NW26</accession>
<accession>Q6PCD8</accession>
<accession>Q8N9B7</accession>
<accession>Q96N73</accession>
<gene>
    <name type="primary">KCTD18</name>
</gene>
<proteinExistence type="evidence at protein level"/>
<feature type="chain" id="PRO_0000248596" description="BTB/POZ domain-containing protein KCTD18">
    <location>
        <begin position="1"/>
        <end position="426"/>
    </location>
</feature>
<feature type="domain" description="BTB">
    <location>
        <begin position="12"/>
        <end position="80"/>
    </location>
</feature>
<feature type="region of interest" description="Disordered" evidence="1">
    <location>
        <begin position="305"/>
        <end position="371"/>
    </location>
</feature>
<feature type="region of interest" description="Disordered" evidence="1">
    <location>
        <begin position="389"/>
        <end position="408"/>
    </location>
</feature>
<feature type="compositionally biased region" description="Polar residues" evidence="1">
    <location>
        <begin position="305"/>
        <end position="317"/>
    </location>
</feature>
<feature type="splice variant" id="VSP_020323" description="In isoform 3." evidence="4">
    <location>
        <begin position="1"/>
        <end position="205"/>
    </location>
</feature>
<feature type="splice variant" id="VSP_020324" description="In isoform 3." evidence="4">
    <original>ELKKMMDAFDAWEGKGVSYWRVPHELIECWTLEERPLLGSLRHMAPIRK</original>
    <variation>MRDEVGAHKPLDSLILDQNLSVNAEGKLGRCFHELLKLYMWKMTRFCIS</variation>
    <location>
        <begin position="206"/>
        <end position="254"/>
    </location>
</feature>
<feature type="splice variant" id="VSP_020325" description="In isoform 2." evidence="4">
    <original>VSYWRVPHELIEC</original>
    <variation>TVQFFYFMEAGGL</variation>
    <location>
        <begin position="222"/>
        <end position="234"/>
    </location>
</feature>
<feature type="splice variant" id="VSP_020326" description="In isoform 2." evidence="4">
    <location>
        <begin position="235"/>
        <end position="426"/>
    </location>
</feature>
<feature type="sequence variant" id="VAR_027355" description="In dbSNP:rs13018579." evidence="2 3">
    <original>A</original>
    <variation>V</variation>
    <location>
        <position position="333"/>
    </location>
</feature>
<feature type="sequence variant" id="VAR_027356" description="In dbSNP:rs10203154.">
    <original>G</original>
    <variation>C</variation>
    <location>
        <position position="336"/>
    </location>
</feature>
<feature type="sequence variant" id="VAR_027357" description="In dbSNP:rs3795969.">
    <original>C</original>
    <variation>S</variation>
    <location>
        <position position="390"/>
    </location>
</feature>
<feature type="sequence variant" id="VAR_027358" description="In dbSNP:rs10203042.">
    <original>A</original>
    <variation>V</variation>
    <location>
        <position position="413"/>
    </location>
</feature>
<feature type="sequence conflict" description="In Ref. 3; AAH67755." evidence="5" ref="3">
    <original>S</original>
    <variation>G</variation>
    <location>
        <position position="200"/>
    </location>
</feature>
<feature type="sequence conflict" description="In Ref. 1; AK095137." evidence="5" ref="1">
    <original>M</original>
    <variation>I</variation>
    <location sequence="Q6PI47-3">
        <position position="43"/>
    </location>
</feature>
<keyword id="KW-0025">Alternative splicing</keyword>
<keyword id="KW-1267">Proteomics identification</keyword>
<keyword id="KW-1185">Reference proteome</keyword>